<proteinExistence type="inferred from homology"/>
<keyword id="KW-1185">Reference proteome</keyword>
<keyword id="KW-0687">Ribonucleoprotein</keyword>
<keyword id="KW-0689">Ribosomal protein</keyword>
<name>RS10_STAS1</name>
<organism>
    <name type="scientific">Staphylococcus saprophyticus subsp. saprophyticus (strain ATCC 15305 / DSM 20229 / NCIMB 8711 / NCTC 7292 / S-41)</name>
    <dbReference type="NCBI Taxonomy" id="342451"/>
    <lineage>
        <taxon>Bacteria</taxon>
        <taxon>Bacillati</taxon>
        <taxon>Bacillota</taxon>
        <taxon>Bacilli</taxon>
        <taxon>Bacillales</taxon>
        <taxon>Staphylococcaceae</taxon>
        <taxon>Staphylococcus</taxon>
    </lineage>
</organism>
<sequence length="102" mass="11590">MAKQKIRIRLKAYDHRVIDQSAEKIVETAKRSGADVSGPIPLPTERSVYTVIRAVHKYKDSREQFEQRTHKRLIDIVNPTPKTVDALMGLNLPSGVDIEIKL</sequence>
<gene>
    <name evidence="1" type="primary">rpsJ</name>
    <name type="ordered locus">SSP0662</name>
</gene>
<protein>
    <recommendedName>
        <fullName evidence="1">Small ribosomal subunit protein uS10</fullName>
    </recommendedName>
    <alternativeName>
        <fullName evidence="2">30S ribosomal protein S10</fullName>
    </alternativeName>
</protein>
<evidence type="ECO:0000255" key="1">
    <source>
        <dbReference type="HAMAP-Rule" id="MF_00508"/>
    </source>
</evidence>
<evidence type="ECO:0000305" key="2"/>
<comment type="function">
    <text evidence="1">Involved in the binding of tRNA to the ribosomes.</text>
</comment>
<comment type="subunit">
    <text evidence="1">Part of the 30S ribosomal subunit.</text>
</comment>
<comment type="similarity">
    <text evidence="1">Belongs to the universal ribosomal protein uS10 family.</text>
</comment>
<dbReference type="EMBL" id="AP008934">
    <property type="protein sequence ID" value="BAE17807.1"/>
    <property type="molecule type" value="Genomic_DNA"/>
</dbReference>
<dbReference type="RefSeq" id="WP_002482611.1">
    <property type="nucleotide sequence ID" value="NZ_MTGA01000036.1"/>
</dbReference>
<dbReference type="SMR" id="Q49ZG9"/>
<dbReference type="GeneID" id="97227379"/>
<dbReference type="KEGG" id="ssp:SSP0662"/>
<dbReference type="eggNOG" id="COG0051">
    <property type="taxonomic scope" value="Bacteria"/>
</dbReference>
<dbReference type="HOGENOM" id="CLU_122625_1_3_9"/>
<dbReference type="OrthoDB" id="9804464at2"/>
<dbReference type="Proteomes" id="UP000006371">
    <property type="component" value="Chromosome"/>
</dbReference>
<dbReference type="GO" id="GO:1990904">
    <property type="term" value="C:ribonucleoprotein complex"/>
    <property type="evidence" value="ECO:0007669"/>
    <property type="project" value="UniProtKB-KW"/>
</dbReference>
<dbReference type="GO" id="GO:0005840">
    <property type="term" value="C:ribosome"/>
    <property type="evidence" value="ECO:0007669"/>
    <property type="project" value="UniProtKB-KW"/>
</dbReference>
<dbReference type="GO" id="GO:0003735">
    <property type="term" value="F:structural constituent of ribosome"/>
    <property type="evidence" value="ECO:0007669"/>
    <property type="project" value="InterPro"/>
</dbReference>
<dbReference type="GO" id="GO:0000049">
    <property type="term" value="F:tRNA binding"/>
    <property type="evidence" value="ECO:0007669"/>
    <property type="project" value="UniProtKB-UniRule"/>
</dbReference>
<dbReference type="GO" id="GO:0006412">
    <property type="term" value="P:translation"/>
    <property type="evidence" value="ECO:0007669"/>
    <property type="project" value="UniProtKB-UniRule"/>
</dbReference>
<dbReference type="FunFam" id="3.30.70.600:FF:000001">
    <property type="entry name" value="30S ribosomal protein S10"/>
    <property type="match status" value="1"/>
</dbReference>
<dbReference type="Gene3D" id="3.30.70.600">
    <property type="entry name" value="Ribosomal protein S10 domain"/>
    <property type="match status" value="1"/>
</dbReference>
<dbReference type="HAMAP" id="MF_00508">
    <property type="entry name" value="Ribosomal_uS10"/>
    <property type="match status" value="1"/>
</dbReference>
<dbReference type="InterPro" id="IPR001848">
    <property type="entry name" value="Ribosomal_uS10"/>
</dbReference>
<dbReference type="InterPro" id="IPR018268">
    <property type="entry name" value="Ribosomal_uS10_CS"/>
</dbReference>
<dbReference type="InterPro" id="IPR027486">
    <property type="entry name" value="Ribosomal_uS10_dom"/>
</dbReference>
<dbReference type="InterPro" id="IPR036838">
    <property type="entry name" value="Ribosomal_uS10_dom_sf"/>
</dbReference>
<dbReference type="NCBIfam" id="NF001861">
    <property type="entry name" value="PRK00596.1"/>
    <property type="match status" value="1"/>
</dbReference>
<dbReference type="NCBIfam" id="TIGR01049">
    <property type="entry name" value="rpsJ_bact"/>
    <property type="match status" value="1"/>
</dbReference>
<dbReference type="PANTHER" id="PTHR11700">
    <property type="entry name" value="30S RIBOSOMAL PROTEIN S10 FAMILY MEMBER"/>
    <property type="match status" value="1"/>
</dbReference>
<dbReference type="Pfam" id="PF00338">
    <property type="entry name" value="Ribosomal_S10"/>
    <property type="match status" value="1"/>
</dbReference>
<dbReference type="PRINTS" id="PR00971">
    <property type="entry name" value="RIBOSOMALS10"/>
</dbReference>
<dbReference type="SMART" id="SM01403">
    <property type="entry name" value="Ribosomal_S10"/>
    <property type="match status" value="1"/>
</dbReference>
<dbReference type="SUPFAM" id="SSF54999">
    <property type="entry name" value="Ribosomal protein S10"/>
    <property type="match status" value="1"/>
</dbReference>
<dbReference type="PROSITE" id="PS00361">
    <property type="entry name" value="RIBOSOMAL_S10"/>
    <property type="match status" value="1"/>
</dbReference>
<feature type="chain" id="PRO_0000146603" description="Small ribosomal subunit protein uS10">
    <location>
        <begin position="1"/>
        <end position="102"/>
    </location>
</feature>
<reference key="1">
    <citation type="journal article" date="2005" name="Proc. Natl. Acad. Sci. U.S.A.">
        <title>Whole genome sequence of Staphylococcus saprophyticus reveals the pathogenesis of uncomplicated urinary tract infection.</title>
        <authorList>
            <person name="Kuroda M."/>
            <person name="Yamashita A."/>
            <person name="Hirakawa H."/>
            <person name="Kumano M."/>
            <person name="Morikawa K."/>
            <person name="Higashide M."/>
            <person name="Maruyama A."/>
            <person name="Inose Y."/>
            <person name="Matoba K."/>
            <person name="Toh H."/>
            <person name="Kuhara S."/>
            <person name="Hattori M."/>
            <person name="Ohta T."/>
        </authorList>
    </citation>
    <scope>NUCLEOTIDE SEQUENCE [LARGE SCALE GENOMIC DNA]</scope>
    <source>
        <strain>ATCC 15305 / DSM 20229 / NCIMB 8711 / NCTC 7292 / S-41</strain>
    </source>
</reference>
<accession>Q49ZG9</accession>